<evidence type="ECO:0000255" key="1">
    <source>
        <dbReference type="HAMAP-Rule" id="MF_00227"/>
    </source>
</evidence>
<keyword id="KW-0255">Endonuclease</keyword>
<keyword id="KW-0378">Hydrolase</keyword>
<keyword id="KW-0540">Nuclease</keyword>
<keyword id="KW-1185">Reference proteome</keyword>
<keyword id="KW-0694">RNA-binding</keyword>
<keyword id="KW-0819">tRNA processing</keyword>
<accession>Q329B4</accession>
<dbReference type="EC" id="3.1.26.5" evidence="1"/>
<dbReference type="EMBL" id="CP000034">
    <property type="protein sequence ID" value="ABB64091.1"/>
    <property type="molecule type" value="Genomic_DNA"/>
</dbReference>
<dbReference type="RefSeq" id="WP_000239730.1">
    <property type="nucleotide sequence ID" value="NC_007606.1"/>
</dbReference>
<dbReference type="RefSeq" id="YP_405582.1">
    <property type="nucleotide sequence ID" value="NC_007606.1"/>
</dbReference>
<dbReference type="SMR" id="Q329B4"/>
<dbReference type="STRING" id="300267.SDY_4186"/>
<dbReference type="EnsemblBacteria" id="ABB64091">
    <property type="protein sequence ID" value="ABB64091"/>
    <property type="gene ID" value="SDY_4186"/>
</dbReference>
<dbReference type="GeneID" id="93778446"/>
<dbReference type="KEGG" id="sdy:SDY_4186"/>
<dbReference type="PATRIC" id="fig|300267.13.peg.4924"/>
<dbReference type="HOGENOM" id="CLU_117179_11_0_6"/>
<dbReference type="Proteomes" id="UP000002716">
    <property type="component" value="Chromosome"/>
</dbReference>
<dbReference type="GO" id="GO:0030677">
    <property type="term" value="C:ribonuclease P complex"/>
    <property type="evidence" value="ECO:0007669"/>
    <property type="project" value="TreeGrafter"/>
</dbReference>
<dbReference type="GO" id="GO:0042781">
    <property type="term" value="F:3'-tRNA processing endoribonuclease activity"/>
    <property type="evidence" value="ECO:0007669"/>
    <property type="project" value="TreeGrafter"/>
</dbReference>
<dbReference type="GO" id="GO:0004526">
    <property type="term" value="F:ribonuclease P activity"/>
    <property type="evidence" value="ECO:0007669"/>
    <property type="project" value="UniProtKB-UniRule"/>
</dbReference>
<dbReference type="GO" id="GO:0000049">
    <property type="term" value="F:tRNA binding"/>
    <property type="evidence" value="ECO:0007669"/>
    <property type="project" value="UniProtKB-UniRule"/>
</dbReference>
<dbReference type="GO" id="GO:0001682">
    <property type="term" value="P:tRNA 5'-leader removal"/>
    <property type="evidence" value="ECO:0007669"/>
    <property type="project" value="UniProtKB-UniRule"/>
</dbReference>
<dbReference type="FunFam" id="3.30.230.10:FF:000016">
    <property type="entry name" value="Ribonuclease P protein component"/>
    <property type="match status" value="1"/>
</dbReference>
<dbReference type="Gene3D" id="3.30.230.10">
    <property type="match status" value="1"/>
</dbReference>
<dbReference type="HAMAP" id="MF_00227">
    <property type="entry name" value="RNase_P"/>
    <property type="match status" value="1"/>
</dbReference>
<dbReference type="InterPro" id="IPR020568">
    <property type="entry name" value="Ribosomal_Su5_D2-typ_SF"/>
</dbReference>
<dbReference type="InterPro" id="IPR014721">
    <property type="entry name" value="Ribsml_uS5_D2-typ_fold_subgr"/>
</dbReference>
<dbReference type="InterPro" id="IPR000100">
    <property type="entry name" value="RNase_P"/>
</dbReference>
<dbReference type="InterPro" id="IPR020539">
    <property type="entry name" value="RNase_P_CS"/>
</dbReference>
<dbReference type="NCBIfam" id="TIGR00188">
    <property type="entry name" value="rnpA"/>
    <property type="match status" value="1"/>
</dbReference>
<dbReference type="PANTHER" id="PTHR33992">
    <property type="entry name" value="RIBONUCLEASE P PROTEIN COMPONENT"/>
    <property type="match status" value="1"/>
</dbReference>
<dbReference type="PANTHER" id="PTHR33992:SF1">
    <property type="entry name" value="RIBONUCLEASE P PROTEIN COMPONENT"/>
    <property type="match status" value="1"/>
</dbReference>
<dbReference type="Pfam" id="PF00825">
    <property type="entry name" value="Ribonuclease_P"/>
    <property type="match status" value="1"/>
</dbReference>
<dbReference type="SUPFAM" id="SSF54211">
    <property type="entry name" value="Ribosomal protein S5 domain 2-like"/>
    <property type="match status" value="1"/>
</dbReference>
<dbReference type="PROSITE" id="PS00648">
    <property type="entry name" value="RIBONUCLEASE_P"/>
    <property type="match status" value="1"/>
</dbReference>
<reference key="1">
    <citation type="journal article" date="2005" name="Nucleic Acids Res.">
        <title>Genome dynamics and diversity of Shigella species, the etiologic agents of bacillary dysentery.</title>
        <authorList>
            <person name="Yang F."/>
            <person name="Yang J."/>
            <person name="Zhang X."/>
            <person name="Chen L."/>
            <person name="Jiang Y."/>
            <person name="Yan Y."/>
            <person name="Tang X."/>
            <person name="Wang J."/>
            <person name="Xiong Z."/>
            <person name="Dong J."/>
            <person name="Xue Y."/>
            <person name="Zhu Y."/>
            <person name="Xu X."/>
            <person name="Sun L."/>
            <person name="Chen S."/>
            <person name="Nie H."/>
            <person name="Peng J."/>
            <person name="Xu J."/>
            <person name="Wang Y."/>
            <person name="Yuan Z."/>
            <person name="Wen Y."/>
            <person name="Yao Z."/>
            <person name="Shen Y."/>
            <person name="Qiang B."/>
            <person name="Hou Y."/>
            <person name="Yu J."/>
            <person name="Jin Q."/>
        </authorList>
    </citation>
    <scope>NUCLEOTIDE SEQUENCE [LARGE SCALE GENOMIC DNA]</scope>
    <source>
        <strain>Sd197</strain>
    </source>
</reference>
<feature type="chain" id="PRO_1000021466" description="Ribonuclease P protein component">
    <location>
        <begin position="1"/>
        <end position="119"/>
    </location>
</feature>
<organism>
    <name type="scientific">Shigella dysenteriae serotype 1 (strain Sd197)</name>
    <dbReference type="NCBI Taxonomy" id="300267"/>
    <lineage>
        <taxon>Bacteria</taxon>
        <taxon>Pseudomonadati</taxon>
        <taxon>Pseudomonadota</taxon>
        <taxon>Gammaproteobacteria</taxon>
        <taxon>Enterobacterales</taxon>
        <taxon>Enterobacteriaceae</taxon>
        <taxon>Shigella</taxon>
    </lineage>
</organism>
<name>RNPA_SHIDS</name>
<protein>
    <recommendedName>
        <fullName evidence="1">Ribonuclease P protein component</fullName>
        <shortName evidence="1">RNase P protein</shortName>
        <shortName evidence="1">RNaseP protein</shortName>
        <ecNumber evidence="1">3.1.26.5</ecNumber>
    </recommendedName>
    <alternativeName>
        <fullName evidence="1">Protein C5</fullName>
    </alternativeName>
</protein>
<gene>
    <name evidence="1" type="primary">rnpA</name>
    <name type="ordered locus">SDY_4186</name>
</gene>
<sequence>MVKLAFPRELRLLTPSQFTFVFQQPQRAGTPQITILGRLNSLGHPRIGLTVAKKNVRRAHERNRIKRLTRESFRLRQHELPAMDFVVVAKKGVADLDNRALSEALEKLWRRHCRLARGS</sequence>
<proteinExistence type="inferred from homology"/>
<comment type="function">
    <text evidence="1">RNaseP catalyzes the removal of the 5'-leader sequence from pre-tRNA to produce the mature 5'-terminus. It can also cleave other RNA substrates such as 4.5S RNA. The protein component plays an auxiliary but essential role in vivo by binding to the 5'-leader sequence and broadening the substrate specificity of the ribozyme.</text>
</comment>
<comment type="catalytic activity">
    <reaction evidence="1">
        <text>Endonucleolytic cleavage of RNA, removing 5'-extranucleotides from tRNA precursor.</text>
        <dbReference type="EC" id="3.1.26.5"/>
    </reaction>
</comment>
<comment type="subunit">
    <text evidence="1">Consists of a catalytic RNA component (M1 or rnpB) and a protein subunit.</text>
</comment>
<comment type="similarity">
    <text evidence="1">Belongs to the RnpA family.</text>
</comment>